<evidence type="ECO:0000255" key="1">
    <source>
        <dbReference type="HAMAP-Rule" id="MF_00154"/>
    </source>
</evidence>
<evidence type="ECO:0000305" key="2"/>
<dbReference type="EC" id="2.5.1.141" evidence="1"/>
<dbReference type="EMBL" id="BA000030">
    <property type="protein sequence ID" value="BAC74027.1"/>
    <property type="status" value="ALT_INIT"/>
    <property type="molecule type" value="Genomic_DNA"/>
</dbReference>
<dbReference type="SMR" id="Q829U3"/>
<dbReference type="KEGG" id="sma:SAVERM_6316"/>
<dbReference type="eggNOG" id="COG0109">
    <property type="taxonomic scope" value="Bacteria"/>
</dbReference>
<dbReference type="HOGENOM" id="CLU_029631_0_1_11"/>
<dbReference type="UniPathway" id="UPA00834">
    <property type="reaction ID" value="UER00712"/>
</dbReference>
<dbReference type="Proteomes" id="UP000000428">
    <property type="component" value="Chromosome"/>
</dbReference>
<dbReference type="GO" id="GO:0005886">
    <property type="term" value="C:plasma membrane"/>
    <property type="evidence" value="ECO:0007669"/>
    <property type="project" value="UniProtKB-SubCell"/>
</dbReference>
<dbReference type="GO" id="GO:0008495">
    <property type="term" value="F:protoheme IX farnesyltransferase activity"/>
    <property type="evidence" value="ECO:0007669"/>
    <property type="project" value="UniProtKB-UniRule"/>
</dbReference>
<dbReference type="GO" id="GO:0048034">
    <property type="term" value="P:heme O biosynthetic process"/>
    <property type="evidence" value="ECO:0007669"/>
    <property type="project" value="UniProtKB-UniRule"/>
</dbReference>
<dbReference type="CDD" id="cd13957">
    <property type="entry name" value="PT_UbiA_Cox10"/>
    <property type="match status" value="1"/>
</dbReference>
<dbReference type="FunFam" id="1.10.357.140:FF:000001">
    <property type="entry name" value="Protoheme IX farnesyltransferase"/>
    <property type="match status" value="1"/>
</dbReference>
<dbReference type="Gene3D" id="1.10.357.140">
    <property type="entry name" value="UbiA prenyltransferase"/>
    <property type="match status" value="1"/>
</dbReference>
<dbReference type="HAMAP" id="MF_00154">
    <property type="entry name" value="CyoE_CtaB"/>
    <property type="match status" value="1"/>
</dbReference>
<dbReference type="InterPro" id="IPR006369">
    <property type="entry name" value="Protohaem_IX_farnesylTrfase"/>
</dbReference>
<dbReference type="InterPro" id="IPR000537">
    <property type="entry name" value="UbiA_prenyltransferase"/>
</dbReference>
<dbReference type="InterPro" id="IPR030470">
    <property type="entry name" value="UbiA_prenylTrfase_CS"/>
</dbReference>
<dbReference type="InterPro" id="IPR044878">
    <property type="entry name" value="UbiA_sf"/>
</dbReference>
<dbReference type="NCBIfam" id="TIGR01473">
    <property type="entry name" value="cyoE_ctaB"/>
    <property type="match status" value="1"/>
</dbReference>
<dbReference type="NCBIfam" id="NF003349">
    <property type="entry name" value="PRK04375.1-2"/>
    <property type="match status" value="1"/>
</dbReference>
<dbReference type="PANTHER" id="PTHR43448:SF7">
    <property type="entry name" value="4-HYDROXYBENZOATE SOLANESYLTRANSFERASE"/>
    <property type="match status" value="1"/>
</dbReference>
<dbReference type="PANTHER" id="PTHR43448">
    <property type="entry name" value="PROTOHEME IX FARNESYLTRANSFERASE, MITOCHONDRIAL"/>
    <property type="match status" value="1"/>
</dbReference>
<dbReference type="Pfam" id="PF01040">
    <property type="entry name" value="UbiA"/>
    <property type="match status" value="1"/>
</dbReference>
<dbReference type="PROSITE" id="PS00943">
    <property type="entry name" value="UBIA"/>
    <property type="match status" value="1"/>
</dbReference>
<reference key="1">
    <citation type="journal article" date="2001" name="Proc. Natl. Acad. Sci. U.S.A.">
        <title>Genome sequence of an industrial microorganism Streptomyces avermitilis: deducing the ability of producing secondary metabolites.</title>
        <authorList>
            <person name="Omura S."/>
            <person name="Ikeda H."/>
            <person name="Ishikawa J."/>
            <person name="Hanamoto A."/>
            <person name="Takahashi C."/>
            <person name="Shinose M."/>
            <person name="Takahashi Y."/>
            <person name="Horikawa H."/>
            <person name="Nakazawa H."/>
            <person name="Osonoe T."/>
            <person name="Kikuchi H."/>
            <person name="Shiba T."/>
            <person name="Sakaki Y."/>
            <person name="Hattori M."/>
        </authorList>
    </citation>
    <scope>NUCLEOTIDE SEQUENCE [LARGE SCALE GENOMIC DNA]</scope>
    <source>
        <strain>ATCC 31267 / DSM 46492 / JCM 5070 / NBRC 14893 / NCIMB 12804 / NRRL 8165 / MA-4680</strain>
    </source>
</reference>
<reference key="2">
    <citation type="journal article" date="2003" name="Nat. Biotechnol.">
        <title>Complete genome sequence and comparative analysis of the industrial microorganism Streptomyces avermitilis.</title>
        <authorList>
            <person name="Ikeda H."/>
            <person name="Ishikawa J."/>
            <person name="Hanamoto A."/>
            <person name="Shinose M."/>
            <person name="Kikuchi H."/>
            <person name="Shiba T."/>
            <person name="Sakaki Y."/>
            <person name="Hattori M."/>
            <person name="Omura S."/>
        </authorList>
    </citation>
    <scope>NUCLEOTIDE SEQUENCE [LARGE SCALE GENOMIC DNA]</scope>
    <source>
        <strain>ATCC 31267 / DSM 46492 / JCM 5070 / NBRC 14893 / NCIMB 12804 / NRRL 8165 / MA-4680</strain>
    </source>
</reference>
<organism>
    <name type="scientific">Streptomyces avermitilis (strain ATCC 31267 / DSM 46492 / JCM 5070 / NBRC 14893 / NCIMB 12804 / NRRL 8165 / MA-4680)</name>
    <dbReference type="NCBI Taxonomy" id="227882"/>
    <lineage>
        <taxon>Bacteria</taxon>
        <taxon>Bacillati</taxon>
        <taxon>Actinomycetota</taxon>
        <taxon>Actinomycetes</taxon>
        <taxon>Kitasatosporales</taxon>
        <taxon>Streptomycetaceae</taxon>
        <taxon>Streptomyces</taxon>
    </lineage>
</organism>
<keyword id="KW-1003">Cell membrane</keyword>
<keyword id="KW-0350">Heme biosynthesis</keyword>
<keyword id="KW-0472">Membrane</keyword>
<keyword id="KW-1185">Reference proteome</keyword>
<keyword id="KW-0808">Transferase</keyword>
<keyword id="KW-0812">Transmembrane</keyword>
<keyword id="KW-1133">Transmembrane helix</keyword>
<proteinExistence type="inferred from homology"/>
<gene>
    <name evidence="1" type="primary">ctaB</name>
    <name type="ordered locus">SAV_6316</name>
</gene>
<accession>Q829U3</accession>
<comment type="function">
    <text evidence="1">Converts heme B (protoheme IX) to heme O by substitution of the vinyl group on carbon 2 of heme B porphyrin ring with a hydroxyethyl farnesyl side group.</text>
</comment>
<comment type="catalytic activity">
    <reaction evidence="1">
        <text>heme b + (2E,6E)-farnesyl diphosphate + H2O = Fe(II)-heme o + diphosphate</text>
        <dbReference type="Rhea" id="RHEA:28070"/>
        <dbReference type="ChEBI" id="CHEBI:15377"/>
        <dbReference type="ChEBI" id="CHEBI:33019"/>
        <dbReference type="ChEBI" id="CHEBI:60344"/>
        <dbReference type="ChEBI" id="CHEBI:60530"/>
        <dbReference type="ChEBI" id="CHEBI:175763"/>
        <dbReference type="EC" id="2.5.1.141"/>
    </reaction>
</comment>
<comment type="pathway">
    <text evidence="1">Porphyrin-containing compound metabolism; heme O biosynthesis; heme O from protoheme: step 1/1.</text>
</comment>
<comment type="subcellular location">
    <subcellularLocation>
        <location evidence="1">Cell membrane</location>
        <topology evidence="1">Multi-pass membrane protein</topology>
    </subcellularLocation>
</comment>
<comment type="miscellaneous">
    <text evidence="1">Carbon 2 of the heme B porphyrin ring is defined according to the Fischer nomenclature.</text>
</comment>
<comment type="similarity">
    <text evidence="1">Belongs to the UbiA prenyltransferase family. Protoheme IX farnesyltransferase subfamily.</text>
</comment>
<comment type="sequence caution" evidence="2">
    <conflict type="erroneous initiation">
        <sequence resource="EMBL-CDS" id="BAC74027"/>
    </conflict>
</comment>
<protein>
    <recommendedName>
        <fullName evidence="1">Protoheme IX farnesyltransferase</fullName>
        <ecNumber evidence="1">2.5.1.141</ecNumber>
    </recommendedName>
    <alternativeName>
        <fullName evidence="1">Heme B farnesyltransferase</fullName>
    </alternativeName>
    <alternativeName>
        <fullName evidence="1">Heme O synthase</fullName>
    </alternativeName>
</protein>
<name>COXX_STRAW</name>
<feature type="chain" id="PRO_0000327168" description="Protoheme IX farnesyltransferase">
    <location>
        <begin position="1"/>
        <end position="305"/>
    </location>
</feature>
<feature type="transmembrane region" description="Helical" evidence="1">
    <location>
        <begin position="28"/>
        <end position="48"/>
    </location>
</feature>
<feature type="transmembrane region" description="Helical" evidence="1">
    <location>
        <begin position="52"/>
        <end position="72"/>
    </location>
</feature>
<feature type="transmembrane region" description="Helical" evidence="1">
    <location>
        <begin position="101"/>
        <end position="121"/>
    </location>
</feature>
<feature type="transmembrane region" description="Helical" evidence="1">
    <location>
        <begin position="122"/>
        <end position="142"/>
    </location>
</feature>
<feature type="transmembrane region" description="Helical" evidence="1">
    <location>
        <begin position="149"/>
        <end position="169"/>
    </location>
</feature>
<feature type="transmembrane region" description="Helical" evidence="1">
    <location>
        <begin position="174"/>
        <end position="194"/>
    </location>
</feature>
<feature type="transmembrane region" description="Helical" evidence="1">
    <location>
        <begin position="218"/>
        <end position="238"/>
    </location>
</feature>
<feature type="transmembrane region" description="Helical" evidence="1">
    <location>
        <begin position="240"/>
        <end position="260"/>
    </location>
</feature>
<feature type="transmembrane region" description="Helical" evidence="1">
    <location>
        <begin position="283"/>
        <end position="303"/>
    </location>
</feature>
<sequence length="305" mass="33796">MLTTSSSRGQRPFGARVKAFVALTKPRIIELLLITTVPVMFLAEQGVPSLRLVLLTCLGGYLSAGGANALNMYIDRDIDALMERTSQRPLVTGMVSPRECLAFGITLAVVSTLLFGLTVNWLSAWLSLGALLFYVVVYTMILKRRTSQNIVWGGIAGCLPVLIGWSSVTDSMSWAPVILFLVMFFWTPPHYWPLSMKVKDDYARVGVPMLPVVASNKVVARQIVIYSWVMVGVSLLLTPLGYTGWFYTLVALLAGGFWLWEAHGLQNRAKAEVTGGKLKEMRLFHWSITYVSILFVAVAVDPFLR</sequence>